<protein>
    <recommendedName>
        <fullName evidence="1">UPF0304 protein YfbU</fullName>
    </recommendedName>
</protein>
<comment type="similarity">
    <text evidence="1">Belongs to the UPF0304 family.</text>
</comment>
<comment type="sequence caution" evidence="2">
    <conflict type="erroneous initiation">
        <sequence resource="EMBL-CDS" id="AAG57423"/>
    </conflict>
</comment>
<comment type="sequence caution" evidence="2">
    <conflict type="erroneous initiation">
        <sequence resource="EMBL-CDS" id="BAB36601"/>
    </conflict>
</comment>
<keyword id="KW-1185">Reference proteome</keyword>
<organism>
    <name type="scientific">Escherichia coli O157:H7</name>
    <dbReference type="NCBI Taxonomy" id="83334"/>
    <lineage>
        <taxon>Bacteria</taxon>
        <taxon>Pseudomonadati</taxon>
        <taxon>Pseudomonadota</taxon>
        <taxon>Gammaproteobacteria</taxon>
        <taxon>Enterobacterales</taxon>
        <taxon>Enterobacteriaceae</taxon>
        <taxon>Escherichia</taxon>
    </lineage>
</organism>
<name>YFBU_ECO57</name>
<gene>
    <name evidence="1" type="primary">yfbU</name>
    <name type="ordered locus">Z3555</name>
    <name type="ordered locus">ECs3178</name>
</gene>
<evidence type="ECO:0000255" key="1">
    <source>
        <dbReference type="HAMAP-Rule" id="MF_00762"/>
    </source>
</evidence>
<evidence type="ECO:0000305" key="2"/>
<dbReference type="EMBL" id="AE005174">
    <property type="protein sequence ID" value="AAG57423.1"/>
    <property type="status" value="ALT_INIT"/>
    <property type="molecule type" value="Genomic_DNA"/>
</dbReference>
<dbReference type="EMBL" id="BA000007">
    <property type="protein sequence ID" value="BAB36601.1"/>
    <property type="status" value="ALT_INIT"/>
    <property type="molecule type" value="Genomic_DNA"/>
</dbReference>
<dbReference type="PIR" id="B91026">
    <property type="entry name" value="B91026"/>
</dbReference>
<dbReference type="PIR" id="C85870">
    <property type="entry name" value="C85870"/>
</dbReference>
<dbReference type="RefSeq" id="NP_311205.2">
    <property type="nucleotide sequence ID" value="NC_002695.1"/>
</dbReference>
<dbReference type="RefSeq" id="WP_000426124.1">
    <property type="nucleotide sequence ID" value="NZ_VOAI01000001.1"/>
</dbReference>
<dbReference type="SMR" id="Q8XCV1"/>
<dbReference type="STRING" id="155864.Z3555"/>
<dbReference type="GeneID" id="916886"/>
<dbReference type="KEGG" id="ece:Z3555"/>
<dbReference type="KEGG" id="ecs:ECs_3178"/>
<dbReference type="PATRIC" id="fig|386585.9.peg.3316"/>
<dbReference type="eggNOG" id="COG3013">
    <property type="taxonomic scope" value="Bacteria"/>
</dbReference>
<dbReference type="HOGENOM" id="CLU_101021_1_0_6"/>
<dbReference type="OMA" id="MYHALQV"/>
<dbReference type="Proteomes" id="UP000000558">
    <property type="component" value="Chromosome"/>
</dbReference>
<dbReference type="Proteomes" id="UP000002519">
    <property type="component" value="Chromosome"/>
</dbReference>
<dbReference type="FunFam" id="1.10.3190.10:FF:000001">
    <property type="entry name" value="UPF0304 protein YfbU"/>
    <property type="match status" value="1"/>
</dbReference>
<dbReference type="Gene3D" id="1.10.287.680">
    <property type="entry name" value="Helix hairpin bin"/>
    <property type="match status" value="1"/>
</dbReference>
<dbReference type="Gene3D" id="1.10.3190.10">
    <property type="entry name" value="yfbu gene product, domain 2"/>
    <property type="match status" value="1"/>
</dbReference>
<dbReference type="HAMAP" id="MF_00762">
    <property type="entry name" value="UPF0304"/>
    <property type="match status" value="1"/>
</dbReference>
<dbReference type="InterPro" id="IPR005587">
    <property type="entry name" value="UPF0304_YfbU"/>
</dbReference>
<dbReference type="InterPro" id="IPR023146">
    <property type="entry name" value="YfbU_alpha-helical_sf"/>
</dbReference>
<dbReference type="InterPro" id="IPR023145">
    <property type="entry name" value="YfbU_helix-hairpin_sf"/>
</dbReference>
<dbReference type="NCBIfam" id="NF003936">
    <property type="entry name" value="PRK05445.1"/>
    <property type="match status" value="1"/>
</dbReference>
<dbReference type="Pfam" id="PF03887">
    <property type="entry name" value="YfbU"/>
    <property type="match status" value="1"/>
</dbReference>
<dbReference type="PIRSF" id="PIRSF006272">
    <property type="entry name" value="UCP006272"/>
    <property type="match status" value="1"/>
</dbReference>
<dbReference type="SUPFAM" id="SSF116960">
    <property type="entry name" value="YfbU-like"/>
    <property type="match status" value="1"/>
</dbReference>
<accession>Q8XCV1</accession>
<feature type="chain" id="PRO_0000218164" description="UPF0304 protein YfbU">
    <location>
        <begin position="1"/>
        <end position="164"/>
    </location>
</feature>
<sequence length="164" mass="19536">MEMTNAQRLILSNQYKMMTMLDPANAERYRRLQTIIERGYGLQMRELDREFGELKEETCRTIIDIMEMYHALHVSWSNLQDQQSIDERRVTFLGFDAATEARYLGYVRFMVNVEGRYTHFDAGTHGFNAQTPMWEKYQRMLNVWHACPRQYHLSANEINQIINA</sequence>
<reference key="1">
    <citation type="journal article" date="2001" name="Nature">
        <title>Genome sequence of enterohaemorrhagic Escherichia coli O157:H7.</title>
        <authorList>
            <person name="Perna N.T."/>
            <person name="Plunkett G. III"/>
            <person name="Burland V."/>
            <person name="Mau B."/>
            <person name="Glasner J.D."/>
            <person name="Rose D.J."/>
            <person name="Mayhew G.F."/>
            <person name="Evans P.S."/>
            <person name="Gregor J."/>
            <person name="Kirkpatrick H.A."/>
            <person name="Posfai G."/>
            <person name="Hackett J."/>
            <person name="Klink S."/>
            <person name="Boutin A."/>
            <person name="Shao Y."/>
            <person name="Miller L."/>
            <person name="Grotbeck E.J."/>
            <person name="Davis N.W."/>
            <person name="Lim A."/>
            <person name="Dimalanta E.T."/>
            <person name="Potamousis K."/>
            <person name="Apodaca J."/>
            <person name="Anantharaman T.S."/>
            <person name="Lin J."/>
            <person name="Yen G."/>
            <person name="Schwartz D.C."/>
            <person name="Welch R.A."/>
            <person name="Blattner F.R."/>
        </authorList>
    </citation>
    <scope>NUCLEOTIDE SEQUENCE [LARGE SCALE GENOMIC DNA]</scope>
    <source>
        <strain>O157:H7 / EDL933 / ATCC 700927 / EHEC</strain>
    </source>
</reference>
<reference key="2">
    <citation type="journal article" date="2001" name="DNA Res.">
        <title>Complete genome sequence of enterohemorrhagic Escherichia coli O157:H7 and genomic comparison with a laboratory strain K-12.</title>
        <authorList>
            <person name="Hayashi T."/>
            <person name="Makino K."/>
            <person name="Ohnishi M."/>
            <person name="Kurokawa K."/>
            <person name="Ishii K."/>
            <person name="Yokoyama K."/>
            <person name="Han C.-G."/>
            <person name="Ohtsubo E."/>
            <person name="Nakayama K."/>
            <person name="Murata T."/>
            <person name="Tanaka M."/>
            <person name="Tobe T."/>
            <person name="Iida T."/>
            <person name="Takami H."/>
            <person name="Honda T."/>
            <person name="Sasakawa C."/>
            <person name="Ogasawara N."/>
            <person name="Yasunaga T."/>
            <person name="Kuhara S."/>
            <person name="Shiba T."/>
            <person name="Hattori M."/>
            <person name="Shinagawa H."/>
        </authorList>
    </citation>
    <scope>NUCLEOTIDE SEQUENCE [LARGE SCALE GENOMIC DNA]</scope>
    <source>
        <strain>O157:H7 / Sakai / RIMD 0509952 / EHEC</strain>
    </source>
</reference>
<proteinExistence type="inferred from homology"/>